<sequence length="328" mass="37942">MMWRWTLMLLLLLLRHWALGKPSPDAGPHGQDRVHHGTPLSEAPHDDAHGNFQYDHEAFLGRDVAKEFDQLTPEESQARLGRIVDRMDLAGDSDGWVSLAELRAWIAHTQQRHIRDSVSAAWHTYDTDRDGRVGWEELRNATYGHYEPGEEFHDVEDAETYKKMLARDERRFRVADQDGDSMATREELTAFLHPEEFPHMRDIVVAETLEDLDKNKDGYVQVEEYIADLYSAEPGEEEPAWVQTERQQFRDFRDLNKDGRLDGSEVGYWVLPPSQDQPLVEANHLLHESDTDKDGRLSKAEILSNWNMFVGSQATNYGEDLTRHHDEL</sequence>
<reference key="1">
    <citation type="journal article" date="2004" name="Nature">
        <title>Genome sequence of the Brown Norway rat yields insights into mammalian evolution.</title>
        <authorList>
            <person name="Gibbs R.A."/>
            <person name="Weinstock G.M."/>
            <person name="Metzker M.L."/>
            <person name="Muzny D.M."/>
            <person name="Sodergren E.J."/>
            <person name="Scherer S."/>
            <person name="Scott G."/>
            <person name="Steffen D."/>
            <person name="Worley K.C."/>
            <person name="Burch P.E."/>
            <person name="Okwuonu G."/>
            <person name="Hines S."/>
            <person name="Lewis L."/>
            <person name="Deramo C."/>
            <person name="Delgado O."/>
            <person name="Dugan-Rocha S."/>
            <person name="Miner G."/>
            <person name="Morgan M."/>
            <person name="Hawes A."/>
            <person name="Gill R."/>
            <person name="Holt R.A."/>
            <person name="Adams M.D."/>
            <person name="Amanatides P.G."/>
            <person name="Baden-Tillson H."/>
            <person name="Barnstead M."/>
            <person name="Chin S."/>
            <person name="Evans C.A."/>
            <person name="Ferriera S."/>
            <person name="Fosler C."/>
            <person name="Glodek A."/>
            <person name="Gu Z."/>
            <person name="Jennings D."/>
            <person name="Kraft C.L."/>
            <person name="Nguyen T."/>
            <person name="Pfannkoch C.M."/>
            <person name="Sitter C."/>
            <person name="Sutton G.G."/>
            <person name="Venter J.C."/>
            <person name="Woodage T."/>
            <person name="Smith D."/>
            <person name="Lee H.-M."/>
            <person name="Gustafson E."/>
            <person name="Cahill P."/>
            <person name="Kana A."/>
            <person name="Doucette-Stamm L."/>
            <person name="Weinstock K."/>
            <person name="Fechtel K."/>
            <person name="Weiss R.B."/>
            <person name="Dunn D.M."/>
            <person name="Green E.D."/>
            <person name="Blakesley R.W."/>
            <person name="Bouffard G.G."/>
            <person name="De Jong P.J."/>
            <person name="Osoegawa K."/>
            <person name="Zhu B."/>
            <person name="Marra M."/>
            <person name="Schein J."/>
            <person name="Bosdet I."/>
            <person name="Fjell C."/>
            <person name="Jones S."/>
            <person name="Krzywinski M."/>
            <person name="Mathewson C."/>
            <person name="Siddiqui A."/>
            <person name="Wye N."/>
            <person name="McPherson J."/>
            <person name="Zhao S."/>
            <person name="Fraser C.M."/>
            <person name="Shetty J."/>
            <person name="Shatsman S."/>
            <person name="Geer K."/>
            <person name="Chen Y."/>
            <person name="Abramzon S."/>
            <person name="Nierman W.C."/>
            <person name="Havlak P.H."/>
            <person name="Chen R."/>
            <person name="Durbin K.J."/>
            <person name="Egan A."/>
            <person name="Ren Y."/>
            <person name="Song X.-Z."/>
            <person name="Li B."/>
            <person name="Liu Y."/>
            <person name="Qin X."/>
            <person name="Cawley S."/>
            <person name="Cooney A.J."/>
            <person name="D'Souza L.M."/>
            <person name="Martin K."/>
            <person name="Wu J.Q."/>
            <person name="Gonzalez-Garay M.L."/>
            <person name="Jackson A.R."/>
            <person name="Kalafus K.J."/>
            <person name="McLeod M.P."/>
            <person name="Milosavljevic A."/>
            <person name="Virk D."/>
            <person name="Volkov A."/>
            <person name="Wheeler D.A."/>
            <person name="Zhang Z."/>
            <person name="Bailey J.A."/>
            <person name="Eichler E.E."/>
            <person name="Tuzun E."/>
            <person name="Birney E."/>
            <person name="Mongin E."/>
            <person name="Ureta-Vidal A."/>
            <person name="Woodwark C."/>
            <person name="Zdobnov E."/>
            <person name="Bork P."/>
            <person name="Suyama M."/>
            <person name="Torrents D."/>
            <person name="Alexandersson M."/>
            <person name="Trask B.J."/>
            <person name="Young J.M."/>
            <person name="Huang H."/>
            <person name="Wang H."/>
            <person name="Xing H."/>
            <person name="Daniels S."/>
            <person name="Gietzen D."/>
            <person name="Schmidt J."/>
            <person name="Stevens K."/>
            <person name="Vitt U."/>
            <person name="Wingrove J."/>
            <person name="Camara F."/>
            <person name="Mar Alba M."/>
            <person name="Abril J.F."/>
            <person name="Guigo R."/>
            <person name="Smit A."/>
            <person name="Dubchak I."/>
            <person name="Rubin E.M."/>
            <person name="Couronne O."/>
            <person name="Poliakov A."/>
            <person name="Huebner N."/>
            <person name="Ganten D."/>
            <person name="Goesele C."/>
            <person name="Hummel O."/>
            <person name="Kreitler T."/>
            <person name="Lee Y.-A."/>
            <person name="Monti J."/>
            <person name="Schulz H."/>
            <person name="Zimdahl H."/>
            <person name="Himmelbauer H."/>
            <person name="Lehrach H."/>
            <person name="Jacob H.J."/>
            <person name="Bromberg S."/>
            <person name="Gullings-Handley J."/>
            <person name="Jensen-Seaman M.I."/>
            <person name="Kwitek A.E."/>
            <person name="Lazar J."/>
            <person name="Pasko D."/>
            <person name="Tonellato P.J."/>
            <person name="Twigger S."/>
            <person name="Ponting C.P."/>
            <person name="Duarte J.M."/>
            <person name="Rice S."/>
            <person name="Goodstadt L."/>
            <person name="Beatson S.A."/>
            <person name="Emes R.D."/>
            <person name="Winter E.E."/>
            <person name="Webber C."/>
            <person name="Brandt P."/>
            <person name="Nyakatura G."/>
            <person name="Adetobi M."/>
            <person name="Chiaromonte F."/>
            <person name="Elnitski L."/>
            <person name="Eswara P."/>
            <person name="Hardison R.C."/>
            <person name="Hou M."/>
            <person name="Kolbe D."/>
            <person name="Makova K."/>
            <person name="Miller W."/>
            <person name="Nekrutenko A."/>
            <person name="Riemer C."/>
            <person name="Schwartz S."/>
            <person name="Taylor J."/>
            <person name="Yang S."/>
            <person name="Zhang Y."/>
            <person name="Lindpaintner K."/>
            <person name="Andrews T.D."/>
            <person name="Caccamo M."/>
            <person name="Clamp M."/>
            <person name="Clarke L."/>
            <person name="Curwen V."/>
            <person name="Durbin R.M."/>
            <person name="Eyras E."/>
            <person name="Searle S.M."/>
            <person name="Cooper G.M."/>
            <person name="Batzoglou S."/>
            <person name="Brudno M."/>
            <person name="Sidow A."/>
            <person name="Stone E.A."/>
            <person name="Payseur B.A."/>
            <person name="Bourque G."/>
            <person name="Lopez-Otin C."/>
            <person name="Puente X.S."/>
            <person name="Chakrabarti K."/>
            <person name="Chatterji S."/>
            <person name="Dewey C."/>
            <person name="Pachter L."/>
            <person name="Bray N."/>
            <person name="Yap V.B."/>
            <person name="Caspi A."/>
            <person name="Tesler G."/>
            <person name="Pevzner P.A."/>
            <person name="Haussler D."/>
            <person name="Roskin K.M."/>
            <person name="Baertsch R."/>
            <person name="Clawson H."/>
            <person name="Furey T.S."/>
            <person name="Hinrichs A.S."/>
            <person name="Karolchik D."/>
            <person name="Kent W.J."/>
            <person name="Rosenbloom K.R."/>
            <person name="Trumbower H."/>
            <person name="Weirauch M."/>
            <person name="Cooper D.N."/>
            <person name="Stenson P.D."/>
            <person name="Ma B."/>
            <person name="Brent M."/>
            <person name="Arumugam M."/>
            <person name="Shteynberg D."/>
            <person name="Copley R.R."/>
            <person name="Taylor M.S."/>
            <person name="Riethman H."/>
            <person name="Mudunuri U."/>
            <person name="Peterson J."/>
            <person name="Guyer M."/>
            <person name="Felsenfeld A."/>
            <person name="Old S."/>
            <person name="Mockrin S."/>
            <person name="Collins F.S."/>
        </authorList>
    </citation>
    <scope>NUCLEOTIDE SEQUENCE [LARGE SCALE GENOMIC DNA]</scope>
    <source>
        <strain>Brown Norway</strain>
    </source>
</reference>
<reference key="2">
    <citation type="journal article" date="2004" name="Genome Res.">
        <title>The status, quality, and expansion of the NIH full-length cDNA project: the Mammalian Gene Collection (MGC).</title>
        <authorList>
            <consortium name="The MGC Project Team"/>
        </authorList>
    </citation>
    <scope>NUCLEOTIDE SEQUENCE [LARGE SCALE MRNA]</scope>
    <source>
        <tissue>Heart</tissue>
    </source>
</reference>
<reference key="3">
    <citation type="journal article" date="2006" name="Biochem. J.">
        <title>A proteomic approach reveals transient association of reticulocalbin-3, a novel member of the CREC family, with the precursor of subtilisin-like proprotein convertase, PACE4.</title>
        <authorList>
            <person name="Tsuji A."/>
            <person name="Kikuchi Y."/>
            <person name="Sato Y."/>
            <person name="Koide S."/>
            <person name="Yuasa K."/>
            <person name="Nagahama M."/>
            <person name="Matsuda Y."/>
        </authorList>
    </citation>
    <scope>PROTEIN SEQUENCE OF 217-231; 259-274 AND 301-314</scope>
    <scope>GLYCOSYLATION</scope>
</reference>
<name>RCN3_RAT</name>
<keyword id="KW-0106">Calcium</keyword>
<keyword id="KW-0143">Chaperone</keyword>
<keyword id="KW-0903">Direct protein sequencing</keyword>
<keyword id="KW-0256">Endoplasmic reticulum</keyword>
<keyword id="KW-0325">Glycoprotein</keyword>
<keyword id="KW-0479">Metal-binding</keyword>
<keyword id="KW-1185">Reference proteome</keyword>
<keyword id="KW-0677">Repeat</keyword>
<keyword id="KW-0732">Signal</keyword>
<evidence type="ECO:0000250" key="1">
    <source>
        <dbReference type="UniProtKB" id="Q8BH97"/>
    </source>
</evidence>
<evidence type="ECO:0000250" key="2">
    <source>
        <dbReference type="UniProtKB" id="Q96D15"/>
    </source>
</evidence>
<evidence type="ECO:0000255" key="3"/>
<evidence type="ECO:0000255" key="4">
    <source>
        <dbReference type="PROSITE-ProRule" id="PRU00448"/>
    </source>
</evidence>
<evidence type="ECO:0000255" key="5">
    <source>
        <dbReference type="PROSITE-ProRule" id="PRU10138"/>
    </source>
</evidence>
<evidence type="ECO:0000256" key="6">
    <source>
        <dbReference type="SAM" id="MobiDB-lite"/>
    </source>
</evidence>
<evidence type="ECO:0000269" key="7">
    <source>
    </source>
</evidence>
<evidence type="ECO:0000305" key="8"/>
<evidence type="ECO:0000312" key="9">
    <source>
        <dbReference type="RGD" id="1359365"/>
    </source>
</evidence>
<comment type="function">
    <text evidence="1 2">Probable molecular chaperone assisting protein biosynthesis and transport in the endoplasmic reticulum (By similarity). Required for the proper biosynthesis and transport of pulmonary surfactant-associated protein A/SP-A, pulmonary surfactant-associated protein D/SP-D and the lipid transporter ABCA3 (By similarity). By regulating both the proper expression and the degradation through the endoplasmic reticulum-associated protein degradation pathway of these proteins plays a crucial role in pulmonary surfactant homeostasis (By similarity). Has an anti-fibrotic activity by negatively regulating the secretion of type I and type III collagens (By similarity). This calcium-binding protein also transiently associates with immature PCSK6 and regulates its secretion (By similarity).</text>
</comment>
<comment type="subunit">
    <text evidence="2">Interacts with PCSK6 (immature form including the propeptide); probably involved in the maturation and the secretion of PCSK6.</text>
</comment>
<comment type="subcellular location">
    <subcellularLocation>
        <location evidence="2">Endoplasmic reticulum lumen</location>
    </subcellularLocation>
</comment>
<comment type="PTM">
    <text evidence="7">N-glycosylated.</text>
</comment>
<comment type="PTM">
    <text evidence="2">Degraded by PCSK6 and other endoproteases including FURIN and PCSK5.</text>
</comment>
<comment type="similarity">
    <text evidence="8">Belongs to the CREC family.</text>
</comment>
<feature type="signal peptide" evidence="3">
    <location>
        <begin position="1"/>
        <end position="20"/>
    </location>
</feature>
<feature type="chain" id="PRO_5015294128" description="Reticulocalbin-3">
    <location>
        <begin position="21"/>
        <end position="328"/>
    </location>
</feature>
<feature type="domain" description="EF-hand 1" evidence="4">
    <location>
        <begin position="75"/>
        <end position="112"/>
    </location>
</feature>
<feature type="domain" description="EF-hand 2" evidence="4">
    <location>
        <begin position="113"/>
        <end position="148"/>
    </location>
</feature>
<feature type="domain" description="EF-hand 3" evidence="4">
    <location>
        <begin position="163"/>
        <end position="198"/>
    </location>
</feature>
<feature type="domain" description="EF-hand 4" evidence="4">
    <location>
        <begin position="200"/>
        <end position="235"/>
    </location>
</feature>
<feature type="domain" description="EF-hand 5" evidence="4">
    <location>
        <begin position="241"/>
        <end position="276"/>
    </location>
</feature>
<feature type="domain" description="EF-hand 6" evidence="4">
    <location>
        <begin position="277"/>
        <end position="312"/>
    </location>
</feature>
<feature type="region of interest" description="Disordered" evidence="6">
    <location>
        <begin position="24"/>
        <end position="48"/>
    </location>
</feature>
<feature type="short sequence motif" description="Prevents secretion from ER" evidence="5">
    <location>
        <begin position="325"/>
        <end position="328"/>
    </location>
</feature>
<feature type="binding site" evidence="8">
    <location>
        <position position="92"/>
    </location>
    <ligand>
        <name>Ca(2+)</name>
        <dbReference type="ChEBI" id="CHEBI:29108"/>
        <label>1</label>
    </ligand>
</feature>
<feature type="binding site" evidence="8">
    <location>
        <position position="94"/>
    </location>
    <ligand>
        <name>Ca(2+)</name>
        <dbReference type="ChEBI" id="CHEBI:29108"/>
        <label>1</label>
    </ligand>
</feature>
<feature type="binding site" evidence="8">
    <location>
        <position position="96"/>
    </location>
    <ligand>
        <name>Ca(2+)</name>
        <dbReference type="ChEBI" id="CHEBI:29108"/>
        <label>1</label>
    </ligand>
</feature>
<feature type="binding site" evidence="8">
    <location>
        <position position="101"/>
    </location>
    <ligand>
        <name>Ca(2+)</name>
        <dbReference type="ChEBI" id="CHEBI:29108"/>
        <label>1</label>
    </ligand>
</feature>
<feature type="binding site" evidence="4">
    <location>
        <position position="126"/>
    </location>
    <ligand>
        <name>Ca(2+)</name>
        <dbReference type="ChEBI" id="CHEBI:29108"/>
        <label>2</label>
    </ligand>
</feature>
<feature type="binding site" evidence="4">
    <location>
        <position position="128"/>
    </location>
    <ligand>
        <name>Ca(2+)</name>
        <dbReference type="ChEBI" id="CHEBI:29108"/>
        <label>2</label>
    </ligand>
</feature>
<feature type="binding site" evidence="4">
    <location>
        <position position="130"/>
    </location>
    <ligand>
        <name>Ca(2+)</name>
        <dbReference type="ChEBI" id="CHEBI:29108"/>
        <label>2</label>
    </ligand>
</feature>
<feature type="binding site" evidence="4">
    <location>
        <position position="132"/>
    </location>
    <ligand>
        <name>Ca(2+)</name>
        <dbReference type="ChEBI" id="CHEBI:29108"/>
        <label>2</label>
    </ligand>
</feature>
<feature type="binding site" evidence="4">
    <location>
        <position position="137"/>
    </location>
    <ligand>
        <name>Ca(2+)</name>
        <dbReference type="ChEBI" id="CHEBI:29108"/>
        <label>2</label>
    </ligand>
</feature>
<feature type="binding site" evidence="8">
    <location>
        <position position="176"/>
    </location>
    <ligand>
        <name>Ca(2+)</name>
        <dbReference type="ChEBI" id="CHEBI:29108"/>
        <label>3</label>
    </ligand>
</feature>
<feature type="binding site" evidence="8">
    <location>
        <position position="178"/>
    </location>
    <ligand>
        <name>Ca(2+)</name>
        <dbReference type="ChEBI" id="CHEBI:29108"/>
        <label>3</label>
    </ligand>
</feature>
<feature type="binding site" evidence="8">
    <location>
        <position position="180"/>
    </location>
    <ligand>
        <name>Ca(2+)</name>
        <dbReference type="ChEBI" id="CHEBI:29108"/>
        <label>3</label>
    </ligand>
</feature>
<feature type="binding site" evidence="8">
    <location>
        <position position="182"/>
    </location>
    <ligand>
        <name>Ca(2+)</name>
        <dbReference type="ChEBI" id="CHEBI:29108"/>
        <label>3</label>
    </ligand>
</feature>
<feature type="binding site" evidence="8">
    <location>
        <position position="187"/>
    </location>
    <ligand>
        <name>Ca(2+)</name>
        <dbReference type="ChEBI" id="CHEBI:29108"/>
        <label>3</label>
    </ligand>
</feature>
<feature type="binding site" evidence="4">
    <location>
        <position position="213"/>
    </location>
    <ligand>
        <name>Ca(2+)</name>
        <dbReference type="ChEBI" id="CHEBI:29108"/>
        <label>4</label>
    </ligand>
</feature>
<feature type="binding site" evidence="4">
    <location>
        <position position="215"/>
    </location>
    <ligand>
        <name>Ca(2+)</name>
        <dbReference type="ChEBI" id="CHEBI:29108"/>
        <label>4</label>
    </ligand>
</feature>
<feature type="binding site" evidence="4">
    <location>
        <position position="217"/>
    </location>
    <ligand>
        <name>Ca(2+)</name>
        <dbReference type="ChEBI" id="CHEBI:29108"/>
        <label>4</label>
    </ligand>
</feature>
<feature type="binding site" evidence="4">
    <location>
        <position position="219"/>
    </location>
    <ligand>
        <name>Ca(2+)</name>
        <dbReference type="ChEBI" id="CHEBI:29108"/>
        <label>4</label>
    </ligand>
</feature>
<feature type="binding site" evidence="4">
    <location>
        <position position="224"/>
    </location>
    <ligand>
        <name>Ca(2+)</name>
        <dbReference type="ChEBI" id="CHEBI:29108"/>
        <label>4</label>
    </ligand>
</feature>
<feature type="binding site" evidence="4">
    <location>
        <position position="254"/>
    </location>
    <ligand>
        <name>Ca(2+)</name>
        <dbReference type="ChEBI" id="CHEBI:29108"/>
        <label>5</label>
    </ligand>
</feature>
<feature type="binding site" evidence="4">
    <location>
        <position position="256"/>
    </location>
    <ligand>
        <name>Ca(2+)</name>
        <dbReference type="ChEBI" id="CHEBI:29108"/>
        <label>5</label>
    </ligand>
</feature>
<feature type="binding site" evidence="4">
    <location>
        <position position="258"/>
    </location>
    <ligand>
        <name>Ca(2+)</name>
        <dbReference type="ChEBI" id="CHEBI:29108"/>
        <label>5</label>
    </ligand>
</feature>
<feature type="binding site" evidence="4">
    <location>
        <position position="260"/>
    </location>
    <ligand>
        <name>Ca(2+)</name>
        <dbReference type="ChEBI" id="CHEBI:29108"/>
        <label>5</label>
    </ligand>
</feature>
<feature type="binding site" evidence="4">
    <location>
        <position position="265"/>
    </location>
    <ligand>
        <name>Ca(2+)</name>
        <dbReference type="ChEBI" id="CHEBI:29108"/>
        <label>5</label>
    </ligand>
</feature>
<feature type="binding site" evidence="4">
    <location>
        <position position="290"/>
    </location>
    <ligand>
        <name>Ca(2+)</name>
        <dbReference type="ChEBI" id="CHEBI:29108"/>
        <label>6</label>
    </ligand>
</feature>
<feature type="binding site" evidence="4">
    <location>
        <position position="292"/>
    </location>
    <ligand>
        <name>Ca(2+)</name>
        <dbReference type="ChEBI" id="CHEBI:29108"/>
        <label>6</label>
    </ligand>
</feature>
<feature type="binding site" evidence="4">
    <location>
        <position position="294"/>
    </location>
    <ligand>
        <name>Ca(2+)</name>
        <dbReference type="ChEBI" id="CHEBI:29108"/>
        <label>6</label>
    </ligand>
</feature>
<feature type="binding site" evidence="4">
    <location>
        <position position="296"/>
    </location>
    <ligand>
        <name>Ca(2+)</name>
        <dbReference type="ChEBI" id="CHEBI:29108"/>
        <label>6</label>
    </ligand>
</feature>
<feature type="binding site" evidence="4">
    <location>
        <position position="301"/>
    </location>
    <ligand>
        <name>Ca(2+)</name>
        <dbReference type="ChEBI" id="CHEBI:29108"/>
        <label>6</label>
    </ligand>
</feature>
<feature type="glycosylation site" description="N-linked (GlcNAc...) asparagine" evidence="3">
    <location>
        <position position="140"/>
    </location>
</feature>
<feature type="sequence conflict" description="In Ref. 3; AA sequence." evidence="8" ref="3">
    <original>W</original>
    <variation>T</variation>
    <location>
        <position position="306"/>
    </location>
</feature>
<accession>I6L9G5</accession>
<dbReference type="EMBL" id="AC099450">
    <property type="status" value="NOT_ANNOTATED_CDS"/>
    <property type="molecule type" value="Genomic_DNA"/>
</dbReference>
<dbReference type="EMBL" id="BC083719">
    <property type="protein sequence ID" value="AAH83719.1"/>
    <property type="molecule type" value="mRNA"/>
</dbReference>
<dbReference type="RefSeq" id="NP_001008694.1">
    <property type="nucleotide sequence ID" value="NM_001008694.2"/>
</dbReference>
<dbReference type="FunCoup" id="I6L9G5">
    <property type="interactions" value="241"/>
</dbReference>
<dbReference type="STRING" id="10116.ENSRNOP00000071271"/>
<dbReference type="GlyCosmos" id="I6L9G5">
    <property type="glycosylation" value="1 site, No reported glycans"/>
</dbReference>
<dbReference type="GlyGen" id="I6L9G5">
    <property type="glycosylation" value="1 site"/>
</dbReference>
<dbReference type="iPTMnet" id="I6L9G5"/>
<dbReference type="PhosphoSitePlus" id="I6L9G5"/>
<dbReference type="PaxDb" id="10116-ENSRNOP00000027917"/>
<dbReference type="Ensembl" id="ENSRNOT00000027917.8">
    <property type="protein sequence ID" value="ENSRNOP00000027917.5"/>
    <property type="gene ID" value="ENSRNOG00000043007.4"/>
</dbReference>
<dbReference type="GeneID" id="494125"/>
<dbReference type="KEGG" id="rno:494125"/>
<dbReference type="AGR" id="RGD:1359365"/>
<dbReference type="CTD" id="57333"/>
<dbReference type="RGD" id="1359365">
    <property type="gene designation" value="Rcn3"/>
</dbReference>
<dbReference type="eggNOG" id="KOG4223">
    <property type="taxonomic scope" value="Eukaryota"/>
</dbReference>
<dbReference type="GeneTree" id="ENSGT01010000222360"/>
<dbReference type="HOGENOM" id="CLU_044718_0_1_1"/>
<dbReference type="InParanoid" id="I6L9G5"/>
<dbReference type="OMA" id="MPMKYAD"/>
<dbReference type="OrthoDB" id="16879at9989"/>
<dbReference type="PhylomeDB" id="I6L9G5"/>
<dbReference type="TreeFam" id="TF314849"/>
<dbReference type="PRO" id="PR:I6L9G5"/>
<dbReference type="Proteomes" id="UP000002494">
    <property type="component" value="Chromosome 1"/>
</dbReference>
<dbReference type="Bgee" id="ENSRNOG00000043007">
    <property type="expression patterns" value="Expressed in ovary and 20 other cell types or tissues"/>
</dbReference>
<dbReference type="ExpressionAtlas" id="I6L9G5">
    <property type="expression patterns" value="baseline and differential"/>
</dbReference>
<dbReference type="GO" id="GO:0005783">
    <property type="term" value="C:endoplasmic reticulum"/>
    <property type="evidence" value="ECO:0000250"/>
    <property type="project" value="UniProtKB"/>
</dbReference>
<dbReference type="GO" id="GO:0005788">
    <property type="term" value="C:endoplasmic reticulum lumen"/>
    <property type="evidence" value="ECO:0007669"/>
    <property type="project" value="UniProtKB-SubCell"/>
</dbReference>
<dbReference type="GO" id="GO:0005509">
    <property type="term" value="F:calcium ion binding"/>
    <property type="evidence" value="ECO:0000250"/>
    <property type="project" value="UniProtKB"/>
</dbReference>
<dbReference type="GO" id="GO:0032964">
    <property type="term" value="P:collagen biosynthetic process"/>
    <property type="evidence" value="ECO:0000250"/>
    <property type="project" value="UniProtKB"/>
</dbReference>
<dbReference type="GO" id="GO:0036503">
    <property type="term" value="P:ERAD pathway"/>
    <property type="evidence" value="ECO:0000250"/>
    <property type="project" value="UniProtKB"/>
</dbReference>
<dbReference type="GO" id="GO:0060428">
    <property type="term" value="P:lung epithelium development"/>
    <property type="evidence" value="ECO:0000250"/>
    <property type="project" value="UniProtKB"/>
</dbReference>
<dbReference type="GO" id="GO:0055091">
    <property type="term" value="P:phospholipid homeostasis"/>
    <property type="evidence" value="ECO:0000250"/>
    <property type="project" value="UniProtKB"/>
</dbReference>
<dbReference type="GO" id="GO:0010952">
    <property type="term" value="P:positive regulation of peptidase activity"/>
    <property type="evidence" value="ECO:0000250"/>
    <property type="project" value="UniProtKB"/>
</dbReference>
<dbReference type="GO" id="GO:0009306">
    <property type="term" value="P:protein secretion"/>
    <property type="evidence" value="ECO:0000250"/>
    <property type="project" value="UniProtKB"/>
</dbReference>
<dbReference type="GO" id="GO:0015031">
    <property type="term" value="P:protein transport"/>
    <property type="evidence" value="ECO:0000250"/>
    <property type="project" value="UniProtKB"/>
</dbReference>
<dbReference type="GO" id="GO:0051896">
    <property type="term" value="P:regulation of phosphatidylinositol 3-kinase/protein kinase B signal transduction"/>
    <property type="evidence" value="ECO:0000266"/>
    <property type="project" value="RGD"/>
</dbReference>
<dbReference type="GO" id="GO:0043129">
    <property type="term" value="P:surfactant homeostasis"/>
    <property type="evidence" value="ECO:0000250"/>
    <property type="project" value="UniProtKB"/>
</dbReference>
<dbReference type="CDD" id="cd16230">
    <property type="entry name" value="EFh_CREC_RCN3"/>
    <property type="match status" value="1"/>
</dbReference>
<dbReference type="FunFam" id="1.10.238.10:FF:000104">
    <property type="entry name" value="calumenin isoform X1"/>
    <property type="match status" value="1"/>
</dbReference>
<dbReference type="Gene3D" id="1.10.238.10">
    <property type="entry name" value="EF-hand"/>
    <property type="match status" value="2"/>
</dbReference>
<dbReference type="InterPro" id="IPR011992">
    <property type="entry name" value="EF-hand-dom_pair"/>
</dbReference>
<dbReference type="InterPro" id="IPR018247">
    <property type="entry name" value="EF_Hand_1_Ca_BS"/>
</dbReference>
<dbReference type="InterPro" id="IPR002048">
    <property type="entry name" value="EF_hand_dom"/>
</dbReference>
<dbReference type="PANTHER" id="PTHR10827">
    <property type="entry name" value="RETICULOCALBIN"/>
    <property type="match status" value="1"/>
</dbReference>
<dbReference type="PANTHER" id="PTHR10827:SF47">
    <property type="entry name" value="RETICULOCALBIN-3"/>
    <property type="match status" value="1"/>
</dbReference>
<dbReference type="Pfam" id="PF13202">
    <property type="entry name" value="EF-hand_5"/>
    <property type="match status" value="1"/>
</dbReference>
<dbReference type="Pfam" id="PF13499">
    <property type="entry name" value="EF-hand_7"/>
    <property type="match status" value="1"/>
</dbReference>
<dbReference type="SMART" id="SM00054">
    <property type="entry name" value="EFh"/>
    <property type="match status" value="3"/>
</dbReference>
<dbReference type="SUPFAM" id="SSF47473">
    <property type="entry name" value="EF-hand"/>
    <property type="match status" value="2"/>
</dbReference>
<dbReference type="PROSITE" id="PS00018">
    <property type="entry name" value="EF_HAND_1"/>
    <property type="match status" value="4"/>
</dbReference>
<dbReference type="PROSITE" id="PS50222">
    <property type="entry name" value="EF_HAND_2"/>
    <property type="match status" value="6"/>
</dbReference>
<dbReference type="PROSITE" id="PS00014">
    <property type="entry name" value="ER_TARGET"/>
    <property type="match status" value="1"/>
</dbReference>
<protein>
    <recommendedName>
        <fullName evidence="8">Reticulocalbin-3</fullName>
    </recommendedName>
</protein>
<organism>
    <name type="scientific">Rattus norvegicus</name>
    <name type="common">Rat</name>
    <dbReference type="NCBI Taxonomy" id="10116"/>
    <lineage>
        <taxon>Eukaryota</taxon>
        <taxon>Metazoa</taxon>
        <taxon>Chordata</taxon>
        <taxon>Craniata</taxon>
        <taxon>Vertebrata</taxon>
        <taxon>Euteleostomi</taxon>
        <taxon>Mammalia</taxon>
        <taxon>Eutheria</taxon>
        <taxon>Euarchontoglires</taxon>
        <taxon>Glires</taxon>
        <taxon>Rodentia</taxon>
        <taxon>Myomorpha</taxon>
        <taxon>Muroidea</taxon>
        <taxon>Muridae</taxon>
        <taxon>Murinae</taxon>
        <taxon>Rattus</taxon>
    </lineage>
</organism>
<proteinExistence type="evidence at protein level"/>
<gene>
    <name evidence="9" type="primary">Rcn3</name>
</gene>